<keyword id="KW-0687">Ribonucleoprotein</keyword>
<keyword id="KW-0689">Ribosomal protein</keyword>
<keyword id="KW-0694">RNA-binding</keyword>
<keyword id="KW-0699">rRNA-binding</keyword>
<evidence type="ECO:0000255" key="1">
    <source>
        <dbReference type="HAMAP-Rule" id="MF_00270"/>
    </source>
</evidence>
<evidence type="ECO:0000305" key="2"/>
<gene>
    <name evidence="1" type="primary">rpsR</name>
    <name type="ordered locus">Bcen_6207</name>
</gene>
<accession>Q1BH34</accession>
<name>RS18_BURO1</name>
<sequence>MARPTGKKFDKRRQQQNPLFKRKKFCRFTAAGVEQIDYKDTETLKDFIGENGKITPARLTGTKAHYQRQLDTAIKRARFLALLPYTDQHKA</sequence>
<protein>
    <recommendedName>
        <fullName evidence="1">Small ribosomal subunit protein bS18</fullName>
    </recommendedName>
    <alternativeName>
        <fullName evidence="2">30S ribosomal protein S18</fullName>
    </alternativeName>
</protein>
<reference key="1">
    <citation type="submission" date="2006-05" db="EMBL/GenBank/DDBJ databases">
        <title>Complete sequence of chromosome 3 of Burkholderia cenocepacia AU 1054.</title>
        <authorList>
            <consortium name="US DOE Joint Genome Institute"/>
            <person name="Copeland A."/>
            <person name="Lucas S."/>
            <person name="Lapidus A."/>
            <person name="Barry K."/>
            <person name="Detter J.C."/>
            <person name="Glavina del Rio T."/>
            <person name="Hammon N."/>
            <person name="Israni S."/>
            <person name="Dalin E."/>
            <person name="Tice H."/>
            <person name="Pitluck S."/>
            <person name="Chain P."/>
            <person name="Malfatti S."/>
            <person name="Shin M."/>
            <person name="Vergez L."/>
            <person name="Schmutz J."/>
            <person name="Larimer F."/>
            <person name="Land M."/>
            <person name="Hauser L."/>
            <person name="Kyrpides N."/>
            <person name="Lykidis A."/>
            <person name="LiPuma J.J."/>
            <person name="Konstantinidis K."/>
            <person name="Tiedje J.M."/>
            <person name="Richardson P."/>
        </authorList>
    </citation>
    <scope>NUCLEOTIDE SEQUENCE [LARGE SCALE GENOMIC DNA]</scope>
    <source>
        <strain>AU 1054</strain>
    </source>
</reference>
<proteinExistence type="inferred from homology"/>
<comment type="function">
    <text evidence="1">Binds as a heterodimer with protein bS6 to the central domain of the 16S rRNA, where it helps stabilize the platform of the 30S subunit.</text>
</comment>
<comment type="subunit">
    <text evidence="1">Part of the 30S ribosomal subunit. Forms a tight heterodimer with protein bS6.</text>
</comment>
<comment type="similarity">
    <text evidence="1">Belongs to the bacterial ribosomal protein bS18 family.</text>
</comment>
<feature type="chain" id="PRO_1000003457" description="Small ribosomal subunit protein bS18">
    <location>
        <begin position="1"/>
        <end position="91"/>
    </location>
</feature>
<dbReference type="EMBL" id="CP000380">
    <property type="protein sequence ID" value="ABF81071.1"/>
    <property type="molecule type" value="Genomic_DNA"/>
</dbReference>
<dbReference type="SMR" id="Q1BH34"/>
<dbReference type="HOGENOM" id="CLU_148710_0_3_4"/>
<dbReference type="GO" id="GO:0022627">
    <property type="term" value="C:cytosolic small ribosomal subunit"/>
    <property type="evidence" value="ECO:0007669"/>
    <property type="project" value="TreeGrafter"/>
</dbReference>
<dbReference type="GO" id="GO:0070181">
    <property type="term" value="F:small ribosomal subunit rRNA binding"/>
    <property type="evidence" value="ECO:0007669"/>
    <property type="project" value="TreeGrafter"/>
</dbReference>
<dbReference type="GO" id="GO:0003735">
    <property type="term" value="F:structural constituent of ribosome"/>
    <property type="evidence" value="ECO:0007669"/>
    <property type="project" value="InterPro"/>
</dbReference>
<dbReference type="GO" id="GO:0006412">
    <property type="term" value="P:translation"/>
    <property type="evidence" value="ECO:0007669"/>
    <property type="project" value="UniProtKB-UniRule"/>
</dbReference>
<dbReference type="Gene3D" id="4.10.640.10">
    <property type="entry name" value="Ribosomal protein S18"/>
    <property type="match status" value="1"/>
</dbReference>
<dbReference type="HAMAP" id="MF_00270">
    <property type="entry name" value="Ribosomal_bS18"/>
    <property type="match status" value="1"/>
</dbReference>
<dbReference type="InterPro" id="IPR001648">
    <property type="entry name" value="Ribosomal_bS18"/>
</dbReference>
<dbReference type="InterPro" id="IPR018275">
    <property type="entry name" value="Ribosomal_bS18_CS"/>
</dbReference>
<dbReference type="InterPro" id="IPR036870">
    <property type="entry name" value="Ribosomal_bS18_sf"/>
</dbReference>
<dbReference type="NCBIfam" id="TIGR00165">
    <property type="entry name" value="S18"/>
    <property type="match status" value="1"/>
</dbReference>
<dbReference type="PANTHER" id="PTHR13479">
    <property type="entry name" value="30S RIBOSOMAL PROTEIN S18"/>
    <property type="match status" value="1"/>
</dbReference>
<dbReference type="PANTHER" id="PTHR13479:SF40">
    <property type="entry name" value="SMALL RIBOSOMAL SUBUNIT PROTEIN BS18M"/>
    <property type="match status" value="1"/>
</dbReference>
<dbReference type="Pfam" id="PF01084">
    <property type="entry name" value="Ribosomal_S18"/>
    <property type="match status" value="1"/>
</dbReference>
<dbReference type="PRINTS" id="PR00974">
    <property type="entry name" value="RIBOSOMALS18"/>
</dbReference>
<dbReference type="SUPFAM" id="SSF46911">
    <property type="entry name" value="Ribosomal protein S18"/>
    <property type="match status" value="1"/>
</dbReference>
<dbReference type="PROSITE" id="PS00057">
    <property type="entry name" value="RIBOSOMAL_S18"/>
    <property type="match status" value="1"/>
</dbReference>
<organism>
    <name type="scientific">Burkholderia orbicola (strain AU 1054)</name>
    <dbReference type="NCBI Taxonomy" id="331271"/>
    <lineage>
        <taxon>Bacteria</taxon>
        <taxon>Pseudomonadati</taxon>
        <taxon>Pseudomonadota</taxon>
        <taxon>Betaproteobacteria</taxon>
        <taxon>Burkholderiales</taxon>
        <taxon>Burkholderiaceae</taxon>
        <taxon>Burkholderia</taxon>
        <taxon>Burkholderia cepacia complex</taxon>
        <taxon>Burkholderia orbicola</taxon>
    </lineage>
</organism>